<proteinExistence type="inferred from homology"/>
<reference key="1">
    <citation type="journal article" date="2008" name="Genome Res.">
        <title>Comparative genome analysis of Salmonella enteritidis PT4 and Salmonella gallinarum 287/91 provides insights into evolutionary and host adaptation pathways.</title>
        <authorList>
            <person name="Thomson N.R."/>
            <person name="Clayton D.J."/>
            <person name="Windhorst D."/>
            <person name="Vernikos G."/>
            <person name="Davidson S."/>
            <person name="Churcher C."/>
            <person name="Quail M.A."/>
            <person name="Stevens M."/>
            <person name="Jones M.A."/>
            <person name="Watson M."/>
            <person name="Barron A."/>
            <person name="Layton A."/>
            <person name="Pickard D."/>
            <person name="Kingsley R.A."/>
            <person name="Bignell A."/>
            <person name="Clark L."/>
            <person name="Harris B."/>
            <person name="Ormond D."/>
            <person name="Abdellah Z."/>
            <person name="Brooks K."/>
            <person name="Cherevach I."/>
            <person name="Chillingworth T."/>
            <person name="Woodward J."/>
            <person name="Norberczak H."/>
            <person name="Lord A."/>
            <person name="Arrowsmith C."/>
            <person name="Jagels K."/>
            <person name="Moule S."/>
            <person name="Mungall K."/>
            <person name="Saunders M."/>
            <person name="Whitehead S."/>
            <person name="Chabalgoity J.A."/>
            <person name="Maskell D."/>
            <person name="Humphreys T."/>
            <person name="Roberts M."/>
            <person name="Barrow P.A."/>
            <person name="Dougan G."/>
            <person name="Parkhill J."/>
        </authorList>
    </citation>
    <scope>NUCLEOTIDE SEQUENCE [LARGE SCALE GENOMIC DNA]</scope>
    <source>
        <strain>287/91 / NCTC 13346</strain>
    </source>
</reference>
<accession>B5RDE8</accession>
<comment type="catalytic activity">
    <reaction evidence="1">
        <text>L-cysteine + L-glutamate + ATP = gamma-L-glutamyl-L-cysteine + ADP + phosphate + H(+)</text>
        <dbReference type="Rhea" id="RHEA:13285"/>
        <dbReference type="ChEBI" id="CHEBI:15378"/>
        <dbReference type="ChEBI" id="CHEBI:29985"/>
        <dbReference type="ChEBI" id="CHEBI:30616"/>
        <dbReference type="ChEBI" id="CHEBI:35235"/>
        <dbReference type="ChEBI" id="CHEBI:43474"/>
        <dbReference type="ChEBI" id="CHEBI:58173"/>
        <dbReference type="ChEBI" id="CHEBI:456216"/>
        <dbReference type="EC" id="6.3.2.2"/>
    </reaction>
</comment>
<comment type="pathway">
    <text evidence="1">Sulfur metabolism; glutathione biosynthesis; glutathione from L-cysteine and L-glutamate: step 1/2.</text>
</comment>
<comment type="similarity">
    <text evidence="1">Belongs to the glutamate--cysteine ligase type 1 family. Type 1 subfamily.</text>
</comment>
<dbReference type="EC" id="6.3.2.2" evidence="1"/>
<dbReference type="EMBL" id="AM933173">
    <property type="protein sequence ID" value="CAR38535.1"/>
    <property type="molecule type" value="Genomic_DNA"/>
</dbReference>
<dbReference type="RefSeq" id="WP_000611822.1">
    <property type="nucleotide sequence ID" value="NC_011274.1"/>
</dbReference>
<dbReference type="SMR" id="B5RDE8"/>
<dbReference type="KEGG" id="seg:SG2726"/>
<dbReference type="HOGENOM" id="CLU_020728_3_0_6"/>
<dbReference type="UniPathway" id="UPA00142">
    <property type="reaction ID" value="UER00209"/>
</dbReference>
<dbReference type="Proteomes" id="UP000008321">
    <property type="component" value="Chromosome"/>
</dbReference>
<dbReference type="GO" id="GO:0005829">
    <property type="term" value="C:cytosol"/>
    <property type="evidence" value="ECO:0007669"/>
    <property type="project" value="TreeGrafter"/>
</dbReference>
<dbReference type="GO" id="GO:0005524">
    <property type="term" value="F:ATP binding"/>
    <property type="evidence" value="ECO:0007669"/>
    <property type="project" value="UniProtKB-KW"/>
</dbReference>
<dbReference type="GO" id="GO:0004357">
    <property type="term" value="F:glutamate-cysteine ligase activity"/>
    <property type="evidence" value="ECO:0007669"/>
    <property type="project" value="UniProtKB-UniRule"/>
</dbReference>
<dbReference type="GO" id="GO:0046872">
    <property type="term" value="F:metal ion binding"/>
    <property type="evidence" value="ECO:0007669"/>
    <property type="project" value="TreeGrafter"/>
</dbReference>
<dbReference type="GO" id="GO:0006750">
    <property type="term" value="P:glutathione biosynthetic process"/>
    <property type="evidence" value="ECO:0007669"/>
    <property type="project" value="UniProtKB-UniRule"/>
</dbReference>
<dbReference type="FunFam" id="3.30.590.20:FF:000001">
    <property type="entry name" value="Glutamate--cysteine ligase"/>
    <property type="match status" value="1"/>
</dbReference>
<dbReference type="Gene3D" id="3.30.590.20">
    <property type="match status" value="1"/>
</dbReference>
<dbReference type="HAMAP" id="MF_00578">
    <property type="entry name" value="Glu_cys_ligase"/>
    <property type="match status" value="1"/>
</dbReference>
<dbReference type="InterPro" id="IPR014746">
    <property type="entry name" value="Gln_synth/guanido_kin_cat_dom"/>
</dbReference>
<dbReference type="InterPro" id="IPR007370">
    <property type="entry name" value="Glu_cys_ligase"/>
</dbReference>
<dbReference type="InterPro" id="IPR006334">
    <property type="entry name" value="Glut_cys_ligase"/>
</dbReference>
<dbReference type="NCBIfam" id="TIGR01434">
    <property type="entry name" value="glu_cys_ligase"/>
    <property type="match status" value="1"/>
</dbReference>
<dbReference type="PANTHER" id="PTHR38761">
    <property type="entry name" value="GLUTAMATE--CYSTEINE LIGASE"/>
    <property type="match status" value="1"/>
</dbReference>
<dbReference type="PANTHER" id="PTHR38761:SF1">
    <property type="entry name" value="GLUTAMATE--CYSTEINE LIGASE"/>
    <property type="match status" value="1"/>
</dbReference>
<dbReference type="Pfam" id="PF04262">
    <property type="entry name" value="Glu_cys_ligase"/>
    <property type="match status" value="1"/>
</dbReference>
<dbReference type="SUPFAM" id="SSF55931">
    <property type="entry name" value="Glutamine synthetase/guanido kinase"/>
    <property type="match status" value="1"/>
</dbReference>
<gene>
    <name evidence="1" type="primary">gshA</name>
    <name type="ordered locus">SG2726</name>
</gene>
<name>GSH1_SALG2</name>
<feature type="chain" id="PRO_1000129604" description="Glutamate--cysteine ligase">
    <location>
        <begin position="1"/>
        <end position="518"/>
    </location>
</feature>
<protein>
    <recommendedName>
        <fullName evidence="1">Glutamate--cysteine ligase</fullName>
        <ecNumber evidence="1">6.3.2.2</ecNumber>
    </recommendedName>
    <alternativeName>
        <fullName evidence="1">Gamma-ECS</fullName>
        <shortName evidence="1">GCS</shortName>
    </alternativeName>
    <alternativeName>
        <fullName evidence="1">Gamma-glutamylcysteine synthetase</fullName>
    </alternativeName>
</protein>
<organism>
    <name type="scientific">Salmonella gallinarum (strain 287/91 / NCTC 13346)</name>
    <dbReference type="NCBI Taxonomy" id="550538"/>
    <lineage>
        <taxon>Bacteria</taxon>
        <taxon>Pseudomonadati</taxon>
        <taxon>Pseudomonadota</taxon>
        <taxon>Gammaproteobacteria</taxon>
        <taxon>Enterobacterales</taxon>
        <taxon>Enterobacteriaceae</taxon>
        <taxon>Salmonella</taxon>
    </lineage>
</organism>
<sequence length="518" mass="58357">MIPDVSQALAWLEKHPQALKGIQRGLERETLRVNADGTLATTGHPEALGSALTHKWITTDFAEALLEFITPVDGDIQHMLTFMRDLHRYTARKLGDERMWPLSMPCYIAEGQDIELAQYGTSNTGRFKTLYREGLKNRYGALMQTISGVHYNFSLPMAFWQAKCGVTEGEAAKEKISAGYFRLIRNYYRFGWVIPYLFGASPAICSSFLQGKPTTLPFEKTDCGMYYLPYATSLRLSDLGYTNKSQSNLGITFNDLHEYVAGLKRAIKTPSEEYARIGVEKDGKRLQINSNVLQIENELYAPIRPKRVTRSGESPSDALLRGGIEYIEVRSLDINPFSPIGVDEQQVRFLDLFMVWCVLADAPEMSSDELLCTRTNWSRVILEGRKPGLTLGIGCETAQFPLPKVGKDLFRDLKRVAQTLDSIHGGEEYQKVCDELVACFDNPELTFSARILRSMIDEGIGGTGKAFGEAYRNLLREEPLEILQEEEFIAERDASVRRQQEIEAADTEPFAAWLAKHA</sequence>
<keyword id="KW-0067">ATP-binding</keyword>
<keyword id="KW-0317">Glutathione biosynthesis</keyword>
<keyword id="KW-0436">Ligase</keyword>
<keyword id="KW-0547">Nucleotide-binding</keyword>
<evidence type="ECO:0000255" key="1">
    <source>
        <dbReference type="HAMAP-Rule" id="MF_00578"/>
    </source>
</evidence>